<accession>B0U1H5</accession>
<reference key="1">
    <citation type="journal article" date="2010" name="J. Bacteriol.">
        <title>Whole genome sequences of two Xylella fastidiosa strains (M12 and M23) causing almond leaf scorch disease in California.</title>
        <authorList>
            <person name="Chen J."/>
            <person name="Xie G."/>
            <person name="Han S."/>
            <person name="Chertkov O."/>
            <person name="Sims D."/>
            <person name="Civerolo E.L."/>
        </authorList>
    </citation>
    <scope>NUCLEOTIDE SEQUENCE [LARGE SCALE GENOMIC DNA]</scope>
    <source>
        <strain>M12</strain>
    </source>
</reference>
<sequence length="285" mass="31891">MTTKDTWFTEHFQATGSAIGFRVTGKLDEVQSPFQKIEIYNSTDWGKLMVIDGALMLTSRDNFIYHEMISHPALFTHTAPKCVVIIGGGDCGTLREVLKHPDIEQVTQCDIDEQVTRMAEKHFPELCTSNNDPRATLLFSDGVAYMADCPTNSVDVIIVDSTDPIGPAKGLFNRTFYESCFRALKNDGLLIQQSESPLALLELIKEMRHEMSKAGFKAFKTLPFPQPCYPTGWWSVTLSSKQPNANFAFRQTDAQTKPFDTLYYNAHLHHGVLAPPPFIAHALGE</sequence>
<dbReference type="EC" id="2.5.1.16" evidence="1"/>
<dbReference type="EMBL" id="CP000941">
    <property type="protein sequence ID" value="ACA11159.1"/>
    <property type="molecule type" value="Genomic_DNA"/>
</dbReference>
<dbReference type="RefSeq" id="WP_004085516.1">
    <property type="nucleotide sequence ID" value="NC_010513.1"/>
</dbReference>
<dbReference type="SMR" id="B0U1H5"/>
<dbReference type="KEGG" id="xfm:Xfasm12_0120"/>
<dbReference type="HOGENOM" id="CLU_048199_0_0_6"/>
<dbReference type="UniPathway" id="UPA00248">
    <property type="reaction ID" value="UER00314"/>
</dbReference>
<dbReference type="GO" id="GO:0005829">
    <property type="term" value="C:cytosol"/>
    <property type="evidence" value="ECO:0007669"/>
    <property type="project" value="TreeGrafter"/>
</dbReference>
<dbReference type="GO" id="GO:0004766">
    <property type="term" value="F:spermidine synthase activity"/>
    <property type="evidence" value="ECO:0007669"/>
    <property type="project" value="UniProtKB-UniRule"/>
</dbReference>
<dbReference type="GO" id="GO:0008295">
    <property type="term" value="P:spermidine biosynthetic process"/>
    <property type="evidence" value="ECO:0007669"/>
    <property type="project" value="UniProtKB-UniRule"/>
</dbReference>
<dbReference type="CDD" id="cd02440">
    <property type="entry name" value="AdoMet_MTases"/>
    <property type="match status" value="1"/>
</dbReference>
<dbReference type="Gene3D" id="2.30.140.10">
    <property type="entry name" value="Spermidine synthase, tetramerisation domain"/>
    <property type="match status" value="1"/>
</dbReference>
<dbReference type="Gene3D" id="3.40.50.150">
    <property type="entry name" value="Vaccinia Virus protein VP39"/>
    <property type="match status" value="1"/>
</dbReference>
<dbReference type="HAMAP" id="MF_00198">
    <property type="entry name" value="Spermidine_synth"/>
    <property type="match status" value="1"/>
</dbReference>
<dbReference type="InterPro" id="IPR030374">
    <property type="entry name" value="PABS"/>
</dbReference>
<dbReference type="InterPro" id="IPR030373">
    <property type="entry name" value="PABS_CS"/>
</dbReference>
<dbReference type="InterPro" id="IPR029063">
    <property type="entry name" value="SAM-dependent_MTases_sf"/>
</dbReference>
<dbReference type="InterPro" id="IPR001045">
    <property type="entry name" value="Spermi_synthase"/>
</dbReference>
<dbReference type="InterPro" id="IPR035246">
    <property type="entry name" value="Spermidine_synt_N"/>
</dbReference>
<dbReference type="InterPro" id="IPR037163">
    <property type="entry name" value="Spermidine_synt_N_sf"/>
</dbReference>
<dbReference type="NCBIfam" id="NF002010">
    <property type="entry name" value="PRK00811.1"/>
    <property type="match status" value="1"/>
</dbReference>
<dbReference type="NCBIfam" id="TIGR00417">
    <property type="entry name" value="speE"/>
    <property type="match status" value="1"/>
</dbReference>
<dbReference type="PANTHER" id="PTHR11558:SF11">
    <property type="entry name" value="SPERMIDINE SYNTHASE"/>
    <property type="match status" value="1"/>
</dbReference>
<dbReference type="PANTHER" id="PTHR11558">
    <property type="entry name" value="SPERMIDINE/SPERMINE SYNTHASE"/>
    <property type="match status" value="1"/>
</dbReference>
<dbReference type="Pfam" id="PF17284">
    <property type="entry name" value="Spermine_synt_N"/>
    <property type="match status" value="1"/>
</dbReference>
<dbReference type="Pfam" id="PF01564">
    <property type="entry name" value="Spermine_synth"/>
    <property type="match status" value="1"/>
</dbReference>
<dbReference type="SUPFAM" id="SSF53335">
    <property type="entry name" value="S-adenosyl-L-methionine-dependent methyltransferases"/>
    <property type="match status" value="1"/>
</dbReference>
<dbReference type="PROSITE" id="PS01330">
    <property type="entry name" value="PABS_1"/>
    <property type="match status" value="1"/>
</dbReference>
<dbReference type="PROSITE" id="PS51006">
    <property type="entry name" value="PABS_2"/>
    <property type="match status" value="1"/>
</dbReference>
<protein>
    <recommendedName>
        <fullName evidence="1">Polyamine aminopropyltransferase</fullName>
    </recommendedName>
    <alternativeName>
        <fullName evidence="1">Putrescine aminopropyltransferase</fullName>
        <shortName evidence="1">PAPT</shortName>
    </alternativeName>
    <alternativeName>
        <fullName evidence="1">Spermidine synthase</fullName>
        <shortName evidence="1">SPDS</shortName>
        <shortName evidence="1">SPDSY</shortName>
        <ecNumber evidence="1">2.5.1.16</ecNumber>
    </alternativeName>
</protein>
<comment type="function">
    <text evidence="1">Catalyzes the irreversible transfer of a propylamine group from the amino donor S-adenosylmethioninamine (decarboxy-AdoMet) to putrescine (1,4-diaminobutane) to yield spermidine.</text>
</comment>
<comment type="catalytic activity">
    <reaction evidence="1">
        <text>S-adenosyl 3-(methylsulfanyl)propylamine + putrescine = S-methyl-5'-thioadenosine + spermidine + H(+)</text>
        <dbReference type="Rhea" id="RHEA:12721"/>
        <dbReference type="ChEBI" id="CHEBI:15378"/>
        <dbReference type="ChEBI" id="CHEBI:17509"/>
        <dbReference type="ChEBI" id="CHEBI:57443"/>
        <dbReference type="ChEBI" id="CHEBI:57834"/>
        <dbReference type="ChEBI" id="CHEBI:326268"/>
        <dbReference type="EC" id="2.5.1.16"/>
    </reaction>
</comment>
<comment type="pathway">
    <text evidence="1">Amine and polyamine biosynthesis; spermidine biosynthesis; spermidine from putrescine: step 1/1.</text>
</comment>
<comment type="subunit">
    <text evidence="1">Homodimer or homotetramer.</text>
</comment>
<comment type="subcellular location">
    <subcellularLocation>
        <location evidence="1">Cytoplasm</location>
    </subcellularLocation>
</comment>
<comment type="similarity">
    <text evidence="1">Belongs to the spermidine/spermine synthase family.</text>
</comment>
<feature type="chain" id="PRO_1000099309" description="Polyamine aminopropyltransferase">
    <location>
        <begin position="1"/>
        <end position="285"/>
    </location>
</feature>
<feature type="domain" description="PABS" evidence="1">
    <location>
        <begin position="5"/>
        <end position="241"/>
    </location>
</feature>
<feature type="active site" description="Proton acceptor" evidence="1">
    <location>
        <position position="160"/>
    </location>
</feature>
<feature type="binding site" evidence="1">
    <location>
        <position position="35"/>
    </location>
    <ligand>
        <name>S-methyl-5'-thioadenosine</name>
        <dbReference type="ChEBI" id="CHEBI:17509"/>
    </ligand>
</feature>
<feature type="binding site" evidence="1">
    <location>
        <position position="66"/>
    </location>
    <ligand>
        <name>spermidine</name>
        <dbReference type="ChEBI" id="CHEBI:57834"/>
    </ligand>
</feature>
<feature type="binding site" evidence="1">
    <location>
        <position position="90"/>
    </location>
    <ligand>
        <name>spermidine</name>
        <dbReference type="ChEBI" id="CHEBI:57834"/>
    </ligand>
</feature>
<feature type="binding site" evidence="1">
    <location>
        <position position="110"/>
    </location>
    <ligand>
        <name>S-methyl-5'-thioadenosine</name>
        <dbReference type="ChEBI" id="CHEBI:17509"/>
    </ligand>
</feature>
<feature type="binding site" evidence="1">
    <location>
        <begin position="141"/>
        <end position="142"/>
    </location>
    <ligand>
        <name>S-methyl-5'-thioadenosine</name>
        <dbReference type="ChEBI" id="CHEBI:17509"/>
    </ligand>
</feature>
<feature type="binding site" evidence="1">
    <location>
        <begin position="160"/>
        <end position="163"/>
    </location>
    <ligand>
        <name>spermidine</name>
        <dbReference type="ChEBI" id="CHEBI:57834"/>
    </ligand>
</feature>
<feature type="binding site" evidence="1">
    <location>
        <position position="167"/>
    </location>
    <ligand>
        <name>S-methyl-5'-thioadenosine</name>
        <dbReference type="ChEBI" id="CHEBI:17509"/>
    </ligand>
</feature>
<evidence type="ECO:0000255" key="1">
    <source>
        <dbReference type="HAMAP-Rule" id="MF_00198"/>
    </source>
</evidence>
<proteinExistence type="inferred from homology"/>
<organism>
    <name type="scientific">Xylella fastidiosa (strain M12)</name>
    <dbReference type="NCBI Taxonomy" id="405440"/>
    <lineage>
        <taxon>Bacteria</taxon>
        <taxon>Pseudomonadati</taxon>
        <taxon>Pseudomonadota</taxon>
        <taxon>Gammaproteobacteria</taxon>
        <taxon>Lysobacterales</taxon>
        <taxon>Lysobacteraceae</taxon>
        <taxon>Xylella</taxon>
    </lineage>
</organism>
<name>SPEE_XYLFM</name>
<keyword id="KW-0963">Cytoplasm</keyword>
<keyword id="KW-0620">Polyamine biosynthesis</keyword>
<keyword id="KW-0745">Spermidine biosynthesis</keyword>
<keyword id="KW-0808">Transferase</keyword>
<gene>
    <name evidence="1" type="primary">speE</name>
    <name type="ordered locus">Xfasm12_0120</name>
</gene>